<gene>
    <name type="primary">rpsF</name>
    <name type="ordered locus">BSU40910</name>
</gene>
<evidence type="ECO:0000250" key="1"/>
<evidence type="ECO:0000269" key="2">
    <source>
    </source>
</evidence>
<evidence type="ECO:0000269" key="3">
    <source>
    </source>
</evidence>
<evidence type="ECO:0000305" key="4"/>
<evidence type="ECO:0007744" key="5">
    <source>
        <dbReference type="PDB" id="6HA1"/>
    </source>
</evidence>
<evidence type="ECO:0007744" key="6">
    <source>
        <dbReference type="PDB" id="6HA8"/>
    </source>
</evidence>
<evidence type="ECO:0007829" key="7">
    <source>
        <dbReference type="PDB" id="8CDU"/>
    </source>
</evidence>
<feature type="chain" id="PRO_0000176726" description="Small ribosomal subunit protein bS6">
    <location>
        <begin position="1"/>
        <end position="95"/>
    </location>
</feature>
<feature type="strand" evidence="7">
    <location>
        <begin position="2"/>
        <end position="10"/>
    </location>
</feature>
<feature type="strand" evidence="7">
    <location>
        <begin position="12"/>
        <end position="14"/>
    </location>
</feature>
<feature type="helix" evidence="7">
    <location>
        <begin position="16"/>
        <end position="32"/>
    </location>
</feature>
<feature type="strand" evidence="7">
    <location>
        <begin position="36"/>
        <end position="47"/>
    </location>
</feature>
<feature type="strand" evidence="7">
    <location>
        <begin position="52"/>
        <end position="54"/>
    </location>
</feature>
<feature type="strand" evidence="7">
    <location>
        <begin position="56"/>
        <end position="67"/>
    </location>
</feature>
<feature type="helix" evidence="7">
    <location>
        <begin position="69"/>
        <end position="81"/>
    </location>
</feature>
<feature type="strand" evidence="7">
    <location>
        <begin position="83"/>
        <end position="89"/>
    </location>
</feature>
<name>RS6_BACSU</name>
<reference key="1">
    <citation type="journal article" date="1994" name="DNA Res.">
        <title>Systematic sequencing of the 180 kilobase region of the Bacillus subtilis chromosome containing the replication origin.</title>
        <authorList>
            <person name="Ogasawara N."/>
            <person name="Nakai S."/>
            <person name="Yoshikawa H."/>
        </authorList>
    </citation>
    <scope>NUCLEOTIDE SEQUENCE [GENOMIC DNA]</scope>
    <source>
        <strain>168</strain>
    </source>
</reference>
<reference key="2">
    <citation type="journal article" date="1997" name="Nature">
        <title>The complete genome sequence of the Gram-positive bacterium Bacillus subtilis.</title>
        <authorList>
            <person name="Kunst F."/>
            <person name="Ogasawara N."/>
            <person name="Moszer I."/>
            <person name="Albertini A.M."/>
            <person name="Alloni G."/>
            <person name="Azevedo V."/>
            <person name="Bertero M.G."/>
            <person name="Bessieres P."/>
            <person name="Bolotin A."/>
            <person name="Borchert S."/>
            <person name="Borriss R."/>
            <person name="Boursier L."/>
            <person name="Brans A."/>
            <person name="Braun M."/>
            <person name="Brignell S.C."/>
            <person name="Bron S."/>
            <person name="Brouillet S."/>
            <person name="Bruschi C.V."/>
            <person name="Caldwell B."/>
            <person name="Capuano V."/>
            <person name="Carter N.M."/>
            <person name="Choi S.-K."/>
            <person name="Codani J.-J."/>
            <person name="Connerton I.F."/>
            <person name="Cummings N.J."/>
            <person name="Daniel R.A."/>
            <person name="Denizot F."/>
            <person name="Devine K.M."/>
            <person name="Duesterhoeft A."/>
            <person name="Ehrlich S.D."/>
            <person name="Emmerson P.T."/>
            <person name="Entian K.-D."/>
            <person name="Errington J."/>
            <person name="Fabret C."/>
            <person name="Ferrari E."/>
            <person name="Foulger D."/>
            <person name="Fritz C."/>
            <person name="Fujita M."/>
            <person name="Fujita Y."/>
            <person name="Fuma S."/>
            <person name="Galizzi A."/>
            <person name="Galleron N."/>
            <person name="Ghim S.-Y."/>
            <person name="Glaser P."/>
            <person name="Goffeau A."/>
            <person name="Golightly E.J."/>
            <person name="Grandi G."/>
            <person name="Guiseppi G."/>
            <person name="Guy B.J."/>
            <person name="Haga K."/>
            <person name="Haiech J."/>
            <person name="Harwood C.R."/>
            <person name="Henaut A."/>
            <person name="Hilbert H."/>
            <person name="Holsappel S."/>
            <person name="Hosono S."/>
            <person name="Hullo M.-F."/>
            <person name="Itaya M."/>
            <person name="Jones L.-M."/>
            <person name="Joris B."/>
            <person name="Karamata D."/>
            <person name="Kasahara Y."/>
            <person name="Klaerr-Blanchard M."/>
            <person name="Klein C."/>
            <person name="Kobayashi Y."/>
            <person name="Koetter P."/>
            <person name="Koningstein G."/>
            <person name="Krogh S."/>
            <person name="Kumano M."/>
            <person name="Kurita K."/>
            <person name="Lapidus A."/>
            <person name="Lardinois S."/>
            <person name="Lauber J."/>
            <person name="Lazarevic V."/>
            <person name="Lee S.-M."/>
            <person name="Levine A."/>
            <person name="Liu H."/>
            <person name="Masuda S."/>
            <person name="Mauel C."/>
            <person name="Medigue C."/>
            <person name="Medina N."/>
            <person name="Mellado R.P."/>
            <person name="Mizuno M."/>
            <person name="Moestl D."/>
            <person name="Nakai S."/>
            <person name="Noback M."/>
            <person name="Noone D."/>
            <person name="O'Reilly M."/>
            <person name="Ogawa K."/>
            <person name="Ogiwara A."/>
            <person name="Oudega B."/>
            <person name="Park S.-H."/>
            <person name="Parro V."/>
            <person name="Pohl T.M."/>
            <person name="Portetelle D."/>
            <person name="Porwollik S."/>
            <person name="Prescott A.M."/>
            <person name="Presecan E."/>
            <person name="Pujic P."/>
            <person name="Purnelle B."/>
            <person name="Rapoport G."/>
            <person name="Rey M."/>
            <person name="Reynolds S."/>
            <person name="Rieger M."/>
            <person name="Rivolta C."/>
            <person name="Rocha E."/>
            <person name="Roche B."/>
            <person name="Rose M."/>
            <person name="Sadaie Y."/>
            <person name="Sato T."/>
            <person name="Scanlan E."/>
            <person name="Schleich S."/>
            <person name="Schroeter R."/>
            <person name="Scoffone F."/>
            <person name="Sekiguchi J."/>
            <person name="Sekowska A."/>
            <person name="Seror S.J."/>
            <person name="Serror P."/>
            <person name="Shin B.-S."/>
            <person name="Soldo B."/>
            <person name="Sorokin A."/>
            <person name="Tacconi E."/>
            <person name="Takagi T."/>
            <person name="Takahashi H."/>
            <person name="Takemaru K."/>
            <person name="Takeuchi M."/>
            <person name="Tamakoshi A."/>
            <person name="Tanaka T."/>
            <person name="Terpstra P."/>
            <person name="Tognoni A."/>
            <person name="Tosato V."/>
            <person name="Uchiyama S."/>
            <person name="Vandenbol M."/>
            <person name="Vannier F."/>
            <person name="Vassarotti A."/>
            <person name="Viari A."/>
            <person name="Wambutt R."/>
            <person name="Wedler E."/>
            <person name="Wedler H."/>
            <person name="Weitzenegger T."/>
            <person name="Winters P."/>
            <person name="Wipat A."/>
            <person name="Yamamoto H."/>
            <person name="Yamane K."/>
            <person name="Yasumoto K."/>
            <person name="Yata K."/>
            <person name="Yoshida K."/>
            <person name="Yoshikawa H.-F."/>
            <person name="Zumstein E."/>
            <person name="Yoshikawa H."/>
            <person name="Danchin A."/>
        </authorList>
    </citation>
    <scope>NUCLEOTIDE SEQUENCE [LARGE SCALE GENOMIC DNA]</scope>
    <source>
        <strain>168</strain>
    </source>
</reference>
<reference key="3">
    <citation type="journal article" date="1982" name="Mol. Gen. Genet.">
        <title>Purification and characterization of 30S ribosomal proteins from Bacillus subtilis: correlation to Escherichia coli 30S proteins.</title>
        <authorList>
            <person name="Higo K."/>
            <person name="Otaka E."/>
            <person name="Osawa S."/>
        </authorList>
    </citation>
    <scope>PROTEIN SEQUENCE OF 1-16</scope>
</reference>
<reference key="4">
    <citation type="journal article" date="1996" name="J. Bacteriol.">
        <title>Cold shock stress-induced proteins in Bacillus subtilis.</title>
        <authorList>
            <person name="Graumann P."/>
            <person name="Schroeder K."/>
            <person name="Schmid R."/>
            <person name="Marahiel M.A."/>
        </authorList>
    </citation>
    <scope>PROTEIN SEQUENCE OF 1-23</scope>
    <source>
        <strain>168 / JH642</strain>
    </source>
</reference>
<reference key="5">
    <citation type="journal article" date="2004" name="J. Bacteriol.">
        <title>Differential expression of two paralogous genes of Bacillus subtilis encoding single-stranded DNA binding protein.</title>
        <authorList>
            <person name="Lindner C."/>
            <person name="Nijland R."/>
            <person name="van Hartskamp M."/>
            <person name="Bron S."/>
            <person name="Hamoen L.W."/>
            <person name="Kuipers O.P."/>
        </authorList>
    </citation>
    <scope>INDUCTION</scope>
    <source>
        <strain>168</strain>
    </source>
</reference>
<reference evidence="5 6" key="6">
    <citation type="journal article" date="2018" name="Proc. Natl. Acad. Sci. U.S.A.">
        <title>Structural basis for antibiotic resistance mediated by the Bacillus subtilis ABCF ATPase VmlR.</title>
        <authorList>
            <person name="Crowe-McAuliffe C."/>
            <person name="Graf M."/>
            <person name="Huter P."/>
            <person name="Takada H."/>
            <person name="Abdelshahid M."/>
            <person name="Novacek J."/>
            <person name="Murina V."/>
            <person name="Atkinson G.C."/>
            <person name="Hauryliuk V."/>
            <person name="Wilson D.N."/>
        </authorList>
    </citation>
    <scope>STRUCTURE BY ELECTRON MICROSCOPY (3.10 ANGSTROMS) OF 1-95 WITH AND WITHOUT VIRGINIAMYCIN M</scope>
    <scope>SUBUNIT</scope>
</reference>
<keyword id="KW-0002">3D-structure</keyword>
<keyword id="KW-0903">Direct protein sequencing</keyword>
<keyword id="KW-1185">Reference proteome</keyword>
<keyword id="KW-0687">Ribonucleoprotein</keyword>
<keyword id="KW-0689">Ribosomal protein</keyword>
<keyword id="KW-0694">RNA-binding</keyword>
<keyword id="KW-0699">rRNA-binding</keyword>
<comment type="function">
    <text evidence="1">Binds together with bS18 to 16S ribosomal RNA.</text>
</comment>
<comment type="subunit">
    <text evidence="3">Part of the 30S ribosomal subunit.</text>
</comment>
<comment type="induction">
    <text evidence="2">Strongly expressed during exponential growth, decreases 2-4-fold in stationary phase, part of the rpsF-ssbA-rpsR operon (PubMed:14762004). The operon is induced by DNA damage by mitomycin C (PubMed:14762004).</text>
</comment>
<comment type="similarity">
    <text evidence="4">Belongs to the bacterial ribosomal protein bS6 family.</text>
</comment>
<dbReference type="EMBL" id="D26185">
    <property type="protein sequence ID" value="BAA05221.1"/>
    <property type="molecule type" value="Genomic_DNA"/>
</dbReference>
<dbReference type="EMBL" id="AL009126">
    <property type="protein sequence ID" value="CAB16128.1"/>
    <property type="molecule type" value="Genomic_DNA"/>
</dbReference>
<dbReference type="PIR" id="S66015">
    <property type="entry name" value="S66015"/>
</dbReference>
<dbReference type="RefSeq" id="NP_391971.1">
    <property type="nucleotide sequence ID" value="NC_000964.3"/>
</dbReference>
<dbReference type="RefSeq" id="WP_003244064.1">
    <property type="nucleotide sequence ID" value="NZ_OZ025638.1"/>
</dbReference>
<dbReference type="PDB" id="3J9W">
    <property type="method" value="EM"/>
    <property type="resolution" value="3.90 A"/>
    <property type="chains" value="AF=1-95"/>
</dbReference>
<dbReference type="PDB" id="5NJT">
    <property type="method" value="EM"/>
    <property type="resolution" value="3.80 A"/>
    <property type="chains" value="F=1-95"/>
</dbReference>
<dbReference type="PDB" id="6HA1">
    <property type="method" value="EM"/>
    <property type="resolution" value="3.10 A"/>
    <property type="chains" value="f=1-95"/>
</dbReference>
<dbReference type="PDB" id="6HA8">
    <property type="method" value="EM"/>
    <property type="resolution" value="3.50 A"/>
    <property type="chains" value="f=1-95"/>
</dbReference>
<dbReference type="PDB" id="6HTQ">
    <property type="method" value="EM"/>
    <property type="resolution" value="4.50 A"/>
    <property type="chains" value="f=3-94"/>
</dbReference>
<dbReference type="PDB" id="7O5B">
    <property type="method" value="EM"/>
    <property type="resolution" value="3.33 A"/>
    <property type="chains" value="F=1-95"/>
</dbReference>
<dbReference type="PDB" id="7QGU">
    <property type="method" value="EM"/>
    <property type="resolution" value="4.75 A"/>
    <property type="chains" value="k=1-95"/>
</dbReference>
<dbReference type="PDB" id="7QH4">
    <property type="method" value="EM"/>
    <property type="resolution" value="5.45 A"/>
    <property type="chains" value="j=1-95"/>
</dbReference>
<dbReference type="PDB" id="7QV1">
    <property type="method" value="EM"/>
    <property type="resolution" value="3.50 A"/>
    <property type="chains" value="f=1-95"/>
</dbReference>
<dbReference type="PDB" id="7QV2">
    <property type="method" value="EM"/>
    <property type="resolution" value="3.50 A"/>
    <property type="chains" value="f=1-95"/>
</dbReference>
<dbReference type="PDB" id="7QV3">
    <property type="method" value="EM"/>
    <property type="resolution" value="5.14 A"/>
    <property type="chains" value="f=1-95"/>
</dbReference>
<dbReference type="PDB" id="8BUU">
    <property type="method" value="EM"/>
    <property type="resolution" value="2.90 A"/>
    <property type="chains" value="f=1-95"/>
</dbReference>
<dbReference type="PDB" id="8CDU">
    <property type="method" value="EM"/>
    <property type="resolution" value="3.10 A"/>
    <property type="chains" value="T=1-95"/>
</dbReference>
<dbReference type="PDB" id="8CDV">
    <property type="method" value="EM"/>
    <property type="resolution" value="4.73 A"/>
    <property type="chains" value="T=1-95"/>
</dbReference>
<dbReference type="PDB" id="8CEC">
    <property type="method" value="EM"/>
    <property type="resolution" value="3.57 A"/>
    <property type="chains" value="T=1-95"/>
</dbReference>
<dbReference type="PDB" id="8CED">
    <property type="method" value="EM"/>
    <property type="resolution" value="4.15 A"/>
    <property type="chains" value="T=1-95"/>
</dbReference>
<dbReference type="PDB" id="8CEE">
    <property type="method" value="EM"/>
    <property type="resolution" value="3.70 A"/>
    <property type="chains" value="T=1-95"/>
</dbReference>
<dbReference type="PDB" id="8QCQ">
    <property type="method" value="EM"/>
    <property type="resolution" value="2.30 A"/>
    <property type="chains" value="f=1-95"/>
</dbReference>
<dbReference type="PDB" id="8QPP">
    <property type="method" value="EM"/>
    <property type="resolution" value="3.40 A"/>
    <property type="chains" value="F=1-95"/>
</dbReference>
<dbReference type="PDB" id="8R55">
    <property type="method" value="EM"/>
    <property type="resolution" value="3.57 A"/>
    <property type="chains" value="F=1-95"/>
</dbReference>
<dbReference type="PDBsum" id="3J9W"/>
<dbReference type="PDBsum" id="5NJT"/>
<dbReference type="PDBsum" id="6HA1"/>
<dbReference type="PDBsum" id="6HA8"/>
<dbReference type="PDBsum" id="6HTQ"/>
<dbReference type="PDBsum" id="7O5B"/>
<dbReference type="PDBsum" id="7QGU"/>
<dbReference type="PDBsum" id="7QH4"/>
<dbReference type="PDBsum" id="7QV1"/>
<dbReference type="PDBsum" id="7QV2"/>
<dbReference type="PDBsum" id="7QV3"/>
<dbReference type="PDBsum" id="8BUU"/>
<dbReference type="PDBsum" id="8CDU"/>
<dbReference type="PDBsum" id="8CDV"/>
<dbReference type="PDBsum" id="8CEC"/>
<dbReference type="PDBsum" id="8CED"/>
<dbReference type="PDBsum" id="8CEE"/>
<dbReference type="PDBsum" id="8QCQ"/>
<dbReference type="PDBsum" id="8QPP"/>
<dbReference type="PDBsum" id="8R55"/>
<dbReference type="EMDB" id="EMD-0176"/>
<dbReference type="EMDB" id="EMD-0177"/>
<dbReference type="EMDB" id="EMD-0270"/>
<dbReference type="EMDB" id="EMD-12734"/>
<dbReference type="EMDB" id="EMD-14157"/>
<dbReference type="EMDB" id="EMD-14158"/>
<dbReference type="EMDB" id="EMD-14159"/>
<dbReference type="EMDB" id="EMD-16246"/>
<dbReference type="EMDB" id="EMD-16595"/>
<dbReference type="EMDB" id="EMD-16596"/>
<dbReference type="EMDB" id="EMD-16605"/>
<dbReference type="EMDB" id="EMD-16606"/>
<dbReference type="EMDB" id="EMD-16607"/>
<dbReference type="EMDB" id="EMD-18332"/>
<dbReference type="EMDB" id="EMD-3656"/>
<dbReference type="SMR" id="P21468"/>
<dbReference type="FunCoup" id="P21468">
    <property type="interactions" value="476"/>
</dbReference>
<dbReference type="STRING" id="224308.BSU40910"/>
<dbReference type="jPOST" id="P21468"/>
<dbReference type="PaxDb" id="224308-BSU40910"/>
<dbReference type="EnsemblBacteria" id="CAB16128">
    <property type="protein sequence ID" value="CAB16128"/>
    <property type="gene ID" value="BSU_40910"/>
</dbReference>
<dbReference type="GeneID" id="937919"/>
<dbReference type="KEGG" id="bsu:BSU40910"/>
<dbReference type="PATRIC" id="fig|224308.179.peg.4432"/>
<dbReference type="eggNOG" id="COG0360">
    <property type="taxonomic scope" value="Bacteria"/>
</dbReference>
<dbReference type="InParanoid" id="P21468"/>
<dbReference type="OrthoDB" id="9812702at2"/>
<dbReference type="PhylomeDB" id="P21468"/>
<dbReference type="BioCyc" id="BSUB:BSU40910-MONOMER"/>
<dbReference type="Proteomes" id="UP000001570">
    <property type="component" value="Chromosome"/>
</dbReference>
<dbReference type="GO" id="GO:0005737">
    <property type="term" value="C:cytoplasm"/>
    <property type="evidence" value="ECO:0007669"/>
    <property type="project" value="UniProtKB-ARBA"/>
</dbReference>
<dbReference type="GO" id="GO:1990904">
    <property type="term" value="C:ribonucleoprotein complex"/>
    <property type="evidence" value="ECO:0007669"/>
    <property type="project" value="UniProtKB-KW"/>
</dbReference>
<dbReference type="GO" id="GO:0005840">
    <property type="term" value="C:ribosome"/>
    <property type="evidence" value="ECO:0007669"/>
    <property type="project" value="UniProtKB-KW"/>
</dbReference>
<dbReference type="GO" id="GO:0070181">
    <property type="term" value="F:small ribosomal subunit rRNA binding"/>
    <property type="evidence" value="ECO:0000318"/>
    <property type="project" value="GO_Central"/>
</dbReference>
<dbReference type="GO" id="GO:0003735">
    <property type="term" value="F:structural constituent of ribosome"/>
    <property type="evidence" value="ECO:0000318"/>
    <property type="project" value="GO_Central"/>
</dbReference>
<dbReference type="GO" id="GO:0006412">
    <property type="term" value="P:translation"/>
    <property type="evidence" value="ECO:0007669"/>
    <property type="project" value="UniProtKB-UniRule"/>
</dbReference>
<dbReference type="CDD" id="cd00473">
    <property type="entry name" value="bS6"/>
    <property type="match status" value="1"/>
</dbReference>
<dbReference type="FunFam" id="3.30.70.60:FF:000002">
    <property type="entry name" value="30S ribosomal protein S6"/>
    <property type="match status" value="1"/>
</dbReference>
<dbReference type="Gene3D" id="3.30.70.60">
    <property type="match status" value="1"/>
</dbReference>
<dbReference type="HAMAP" id="MF_00360">
    <property type="entry name" value="Ribosomal_bS6"/>
    <property type="match status" value="1"/>
</dbReference>
<dbReference type="InterPro" id="IPR000529">
    <property type="entry name" value="Ribosomal_bS6"/>
</dbReference>
<dbReference type="InterPro" id="IPR020815">
    <property type="entry name" value="Ribosomal_bS6_CS"/>
</dbReference>
<dbReference type="InterPro" id="IPR035980">
    <property type="entry name" value="Ribosomal_bS6_sf"/>
</dbReference>
<dbReference type="InterPro" id="IPR020814">
    <property type="entry name" value="Ribosomal_S6_plastid/chlpt"/>
</dbReference>
<dbReference type="InterPro" id="IPR014717">
    <property type="entry name" value="Transl_elong_EF1B/ribsomal_bS6"/>
</dbReference>
<dbReference type="NCBIfam" id="TIGR00166">
    <property type="entry name" value="S6"/>
    <property type="match status" value="1"/>
</dbReference>
<dbReference type="PANTHER" id="PTHR21011">
    <property type="entry name" value="MITOCHONDRIAL 28S RIBOSOMAL PROTEIN S6"/>
    <property type="match status" value="1"/>
</dbReference>
<dbReference type="PANTHER" id="PTHR21011:SF1">
    <property type="entry name" value="SMALL RIBOSOMAL SUBUNIT PROTEIN BS6M"/>
    <property type="match status" value="1"/>
</dbReference>
<dbReference type="Pfam" id="PF01250">
    <property type="entry name" value="Ribosomal_S6"/>
    <property type="match status" value="1"/>
</dbReference>
<dbReference type="SUPFAM" id="SSF54995">
    <property type="entry name" value="Ribosomal protein S6"/>
    <property type="match status" value="1"/>
</dbReference>
<dbReference type="PROSITE" id="PS01048">
    <property type="entry name" value="RIBOSOMAL_S6"/>
    <property type="match status" value="1"/>
</dbReference>
<accession>P21468</accession>
<proteinExistence type="evidence at protein level"/>
<sequence length="95" mass="11125">MRKYEVMYIIRPNIDEESKKAVIERFNNVLTSNGAEITGTKDWGKRRLAYEINDFRDGFYQIVNVQSDAAAVQEFDRLAKISDDIIRHIVVKEEE</sequence>
<organism>
    <name type="scientific">Bacillus subtilis (strain 168)</name>
    <dbReference type="NCBI Taxonomy" id="224308"/>
    <lineage>
        <taxon>Bacteria</taxon>
        <taxon>Bacillati</taxon>
        <taxon>Bacillota</taxon>
        <taxon>Bacilli</taxon>
        <taxon>Bacillales</taxon>
        <taxon>Bacillaceae</taxon>
        <taxon>Bacillus</taxon>
    </lineage>
</organism>
<protein>
    <recommendedName>
        <fullName evidence="4">Small ribosomal subunit protein bS6</fullName>
    </recommendedName>
    <alternativeName>
        <fullName>30S ribosomal protein S6</fullName>
    </alternativeName>
    <alternativeName>
        <fullName>BS9</fullName>
    </alternativeName>
</protein>